<organism>
    <name type="scientific">Schizosaccharomyces pombe (strain 972 / ATCC 24843)</name>
    <name type="common">Fission yeast</name>
    <dbReference type="NCBI Taxonomy" id="284812"/>
    <lineage>
        <taxon>Eukaryota</taxon>
        <taxon>Fungi</taxon>
        <taxon>Dikarya</taxon>
        <taxon>Ascomycota</taxon>
        <taxon>Taphrinomycotina</taxon>
        <taxon>Schizosaccharomycetes</taxon>
        <taxon>Schizosaccharomycetales</taxon>
        <taxon>Schizosaccharomycetaceae</taxon>
        <taxon>Schizosaccharomyces</taxon>
    </lineage>
</organism>
<name>EIF3F_SCHPO</name>
<keyword id="KW-0963">Cytoplasm</keyword>
<keyword id="KW-0396">Initiation factor</keyword>
<keyword id="KW-0597">Phosphoprotein</keyword>
<keyword id="KW-0648">Protein biosynthesis</keyword>
<keyword id="KW-1185">Reference proteome</keyword>
<accession>O43060</accession>
<sequence length="302" mass="33251">MALGTKHVLHLTKPSSRSSPLNIVIEPAVLFSILDHSTRKSENNQRVIGTLLGTRSEDGREIEIKSCFAVPHNESSEQVEVEMEYHRAMYHLHLKANPREVVVGWYATSPDLDAFSALIQNLYASPAEPGTAPLGTYPHPCVHLTVNTDVSSPLAIKTYVSSPVGITERLADSCAFVPTPFTIRDDEAVRSGLKAVAAPKNDPSRLASLFTDLQQLRRSTLELLSMIERVSDYVQNVIDGSSPANVAVGRYLMKCFSLIPCVEGQDFEKIFSSHLQDVLVVVYLANTLRTQVDIASRLNLLP</sequence>
<gene>
    <name evidence="6" type="primary">eif3f</name>
    <name type="ORF">SPBC4C3.07</name>
</gene>
<proteinExistence type="evidence at protein level"/>
<comment type="function">
    <text evidence="1 3">Component of the eukaryotic translation initiation factor 3 (eIF-3) complex, which is involved in protein synthesis of a specialized repertoire of mRNAs and, together with other initiation factors, stimulates binding of mRNA and methionyl-tRNAi to the 40S ribosome. The eIF-3 complex specifically targets and initiates translation of a subset of mRNAs involved in cell proliferation.</text>
</comment>
<comment type="subunit">
    <text evidence="1 3">Component of the eukaryotic translation initiation factor 3 (eIF-3) complex. The eIF-3 complex appears to include tif32/eif3a, SPAC25G10.08/eif3b, tif33/eif3c, SPBC4C3.07/eif3f, tif35/eif3g and sum1/eif3i. This set of common subunits may also associate exclusively with either moe1/eif3d and int6/eif3e, or with SPAC821.05/eif3h and SPAC1751.03/eif3m. The eIF-3 complex may also include SPAC3A12.13c/eif3j.</text>
</comment>
<comment type="subcellular location">
    <subcellularLocation>
        <location evidence="1 3 4">Cytoplasm</location>
    </subcellularLocation>
</comment>
<comment type="similarity">
    <text evidence="1">Belongs to the eIF-3 subunit F family.</text>
</comment>
<evidence type="ECO:0000255" key="1">
    <source>
        <dbReference type="HAMAP-Rule" id="MF_03005"/>
    </source>
</evidence>
<evidence type="ECO:0000255" key="2">
    <source>
        <dbReference type="PROSITE-ProRule" id="PRU01182"/>
    </source>
</evidence>
<evidence type="ECO:0000269" key="3">
    <source>
    </source>
</evidence>
<evidence type="ECO:0000269" key="4">
    <source>
    </source>
</evidence>
<evidence type="ECO:0000269" key="5">
    <source>
    </source>
</evidence>
<evidence type="ECO:0000303" key="6">
    <source>
    </source>
</evidence>
<evidence type="ECO:0000305" key="7"/>
<evidence type="ECO:0000312" key="8">
    <source>
        <dbReference type="EMBL" id="CAA16829.1"/>
    </source>
</evidence>
<reference evidence="8" key="1">
    <citation type="journal article" date="2002" name="Nature">
        <title>The genome sequence of Schizosaccharomyces pombe.</title>
        <authorList>
            <person name="Wood V."/>
            <person name="Gwilliam R."/>
            <person name="Rajandream M.A."/>
            <person name="Lyne M.H."/>
            <person name="Lyne R."/>
            <person name="Stewart A."/>
            <person name="Sgouros J.G."/>
            <person name="Peat N."/>
            <person name="Hayles J."/>
            <person name="Baker S.G."/>
            <person name="Basham D."/>
            <person name="Bowman S."/>
            <person name="Brooks K."/>
            <person name="Brown D."/>
            <person name="Brown S."/>
            <person name="Chillingworth T."/>
            <person name="Churcher C.M."/>
            <person name="Collins M."/>
            <person name="Connor R."/>
            <person name="Cronin A."/>
            <person name="Davis P."/>
            <person name="Feltwell T."/>
            <person name="Fraser A."/>
            <person name="Gentles S."/>
            <person name="Goble A."/>
            <person name="Hamlin N."/>
            <person name="Harris D.E."/>
            <person name="Hidalgo J."/>
            <person name="Hodgson G."/>
            <person name="Holroyd S."/>
            <person name="Hornsby T."/>
            <person name="Howarth S."/>
            <person name="Huckle E.J."/>
            <person name="Hunt S."/>
            <person name="Jagels K."/>
            <person name="James K.D."/>
            <person name="Jones L."/>
            <person name="Jones M."/>
            <person name="Leather S."/>
            <person name="McDonald S."/>
            <person name="McLean J."/>
            <person name="Mooney P."/>
            <person name="Moule S."/>
            <person name="Mungall K.L."/>
            <person name="Murphy L.D."/>
            <person name="Niblett D."/>
            <person name="Odell C."/>
            <person name="Oliver K."/>
            <person name="O'Neil S."/>
            <person name="Pearson D."/>
            <person name="Quail M.A."/>
            <person name="Rabbinowitsch E."/>
            <person name="Rutherford K.M."/>
            <person name="Rutter S."/>
            <person name="Saunders D."/>
            <person name="Seeger K."/>
            <person name="Sharp S."/>
            <person name="Skelton J."/>
            <person name="Simmonds M.N."/>
            <person name="Squares R."/>
            <person name="Squares S."/>
            <person name="Stevens K."/>
            <person name="Taylor K."/>
            <person name="Taylor R.G."/>
            <person name="Tivey A."/>
            <person name="Walsh S.V."/>
            <person name="Warren T."/>
            <person name="Whitehead S."/>
            <person name="Woodward J.R."/>
            <person name="Volckaert G."/>
            <person name="Aert R."/>
            <person name="Robben J."/>
            <person name="Grymonprez B."/>
            <person name="Weltjens I."/>
            <person name="Vanstreels E."/>
            <person name="Rieger M."/>
            <person name="Schaefer M."/>
            <person name="Mueller-Auer S."/>
            <person name="Gabel C."/>
            <person name="Fuchs M."/>
            <person name="Duesterhoeft A."/>
            <person name="Fritzc C."/>
            <person name="Holzer E."/>
            <person name="Moestl D."/>
            <person name="Hilbert H."/>
            <person name="Borzym K."/>
            <person name="Langer I."/>
            <person name="Beck A."/>
            <person name="Lehrach H."/>
            <person name="Reinhardt R."/>
            <person name="Pohl T.M."/>
            <person name="Eger P."/>
            <person name="Zimmermann W."/>
            <person name="Wedler H."/>
            <person name="Wambutt R."/>
            <person name="Purnelle B."/>
            <person name="Goffeau A."/>
            <person name="Cadieu E."/>
            <person name="Dreano S."/>
            <person name="Gloux S."/>
            <person name="Lelaure V."/>
            <person name="Mottier S."/>
            <person name="Galibert F."/>
            <person name="Aves S.J."/>
            <person name="Xiang Z."/>
            <person name="Hunt C."/>
            <person name="Moore K."/>
            <person name="Hurst S.M."/>
            <person name="Lucas M."/>
            <person name="Rochet M."/>
            <person name="Gaillardin C."/>
            <person name="Tallada V.A."/>
            <person name="Garzon A."/>
            <person name="Thode G."/>
            <person name="Daga R.R."/>
            <person name="Cruzado L."/>
            <person name="Jimenez J."/>
            <person name="Sanchez M."/>
            <person name="del Rey F."/>
            <person name="Benito J."/>
            <person name="Dominguez A."/>
            <person name="Revuelta J.L."/>
            <person name="Moreno S."/>
            <person name="Armstrong J."/>
            <person name="Forsburg S.L."/>
            <person name="Cerutti L."/>
            <person name="Lowe T."/>
            <person name="McCombie W.R."/>
            <person name="Paulsen I."/>
            <person name="Potashkin J."/>
            <person name="Shpakovski G.V."/>
            <person name="Ussery D."/>
            <person name="Barrell B.G."/>
            <person name="Nurse P."/>
        </authorList>
    </citation>
    <scope>NUCLEOTIDE SEQUENCE [LARGE SCALE GENOMIC DNA]</scope>
    <source>
        <strain>972 / ATCC 24843</strain>
    </source>
</reference>
<reference evidence="7" key="2">
    <citation type="journal article" date="2005" name="BMC Biol.">
        <title>PCI proteins eIF3e and eIF3m define distinct translation initiation factor 3 complexes.</title>
        <authorList>
            <person name="Zhou C."/>
            <person name="Arslan F."/>
            <person name="Wee S."/>
            <person name="Krishnan S."/>
            <person name="Ivanov A.R."/>
            <person name="Oliva A."/>
            <person name="Leatherwood J."/>
            <person name="Wolf D.A."/>
        </authorList>
    </citation>
    <scope>FUNCTION</scope>
    <scope>IDENTIFICATION IN THE EIF-3 COMPLEX</scope>
    <scope>IDENTIFICATION BY MASS SPECTROMETRY</scope>
    <scope>SUBCELLULAR LOCATION</scope>
</reference>
<reference evidence="7" key="3">
    <citation type="journal article" date="2006" name="Nat. Biotechnol.">
        <title>ORFeome cloning and global analysis of protein localization in the fission yeast Schizosaccharomyces pombe.</title>
        <authorList>
            <person name="Matsuyama A."/>
            <person name="Arai R."/>
            <person name="Yashiroda Y."/>
            <person name="Shirai A."/>
            <person name="Kamata A."/>
            <person name="Sekido S."/>
            <person name="Kobayashi Y."/>
            <person name="Hashimoto A."/>
            <person name="Hamamoto M."/>
            <person name="Hiraoka Y."/>
            <person name="Horinouchi S."/>
            <person name="Yoshida M."/>
        </authorList>
    </citation>
    <scope>SUBCELLULAR LOCATION [LARGE SCALE ANALYSIS]</scope>
</reference>
<reference evidence="7" key="4">
    <citation type="journal article" date="2008" name="J. Proteome Res.">
        <title>Phosphoproteome analysis of fission yeast.</title>
        <authorList>
            <person name="Wilson-Grady J.T."/>
            <person name="Villen J."/>
            <person name="Gygi S.P."/>
        </authorList>
    </citation>
    <scope>PHOSPHORYLATION [LARGE SCALE ANALYSIS] AT SER-162</scope>
    <scope>IDENTIFICATION BY MASS SPECTROMETRY</scope>
</reference>
<dbReference type="EMBL" id="CU329671">
    <property type="protein sequence ID" value="CAA16829.1"/>
    <property type="molecule type" value="Genomic_DNA"/>
</dbReference>
<dbReference type="PIR" id="T40490">
    <property type="entry name" value="T40490"/>
</dbReference>
<dbReference type="SMR" id="O43060"/>
<dbReference type="BioGRID" id="277385">
    <property type="interactions" value="9"/>
</dbReference>
<dbReference type="FunCoup" id="O43060">
    <property type="interactions" value="850"/>
</dbReference>
<dbReference type="STRING" id="284812.O43060"/>
<dbReference type="iPTMnet" id="O43060"/>
<dbReference type="PaxDb" id="4896-SPBC4C3.07.1"/>
<dbReference type="EnsemblFungi" id="SPBC4C3.07.1">
    <property type="protein sequence ID" value="SPBC4C3.07.1:pep"/>
    <property type="gene ID" value="SPBC4C3.07"/>
</dbReference>
<dbReference type="KEGG" id="spo:2540868"/>
<dbReference type="PomBase" id="SPBC4C3.07"/>
<dbReference type="VEuPathDB" id="FungiDB:SPBC4C3.07"/>
<dbReference type="eggNOG" id="KOG2975">
    <property type="taxonomic scope" value="Eukaryota"/>
</dbReference>
<dbReference type="HOGENOM" id="CLU_027018_0_0_1"/>
<dbReference type="InParanoid" id="O43060"/>
<dbReference type="OMA" id="EYFVHFH"/>
<dbReference type="PhylomeDB" id="O43060"/>
<dbReference type="Reactome" id="R-SPO-156827">
    <property type="pathway name" value="L13a-mediated translational silencing of Ceruloplasmin expression"/>
</dbReference>
<dbReference type="Reactome" id="R-SPO-72649">
    <property type="pathway name" value="Translation initiation complex formation"/>
</dbReference>
<dbReference type="Reactome" id="R-SPO-72689">
    <property type="pathway name" value="Formation of a pool of free 40S subunits"/>
</dbReference>
<dbReference type="Reactome" id="R-SPO-72695">
    <property type="pathway name" value="Formation of the ternary complex, and subsequently, the 43S complex"/>
</dbReference>
<dbReference type="Reactome" id="R-SPO-72702">
    <property type="pathway name" value="Ribosomal scanning and start codon recognition"/>
</dbReference>
<dbReference type="Reactome" id="R-SPO-72706">
    <property type="pathway name" value="GTP hydrolysis and joining of the 60S ribosomal subunit"/>
</dbReference>
<dbReference type="PRO" id="PR:O43060"/>
<dbReference type="Proteomes" id="UP000002485">
    <property type="component" value="Chromosome II"/>
</dbReference>
<dbReference type="GO" id="GO:0005737">
    <property type="term" value="C:cytoplasm"/>
    <property type="evidence" value="ECO:0000314"/>
    <property type="project" value="PomBase"/>
</dbReference>
<dbReference type="GO" id="GO:0005829">
    <property type="term" value="C:cytosol"/>
    <property type="evidence" value="ECO:0007005"/>
    <property type="project" value="PomBase"/>
</dbReference>
<dbReference type="GO" id="GO:0016282">
    <property type="term" value="C:eukaryotic 43S preinitiation complex"/>
    <property type="evidence" value="ECO:0000314"/>
    <property type="project" value="PomBase"/>
</dbReference>
<dbReference type="GO" id="GO:0033290">
    <property type="term" value="C:eukaryotic 48S preinitiation complex"/>
    <property type="evidence" value="ECO:0007669"/>
    <property type="project" value="UniProtKB-UniRule"/>
</dbReference>
<dbReference type="GO" id="GO:0005852">
    <property type="term" value="C:eukaryotic translation initiation factor 3 complex"/>
    <property type="evidence" value="ECO:0000314"/>
    <property type="project" value="PomBase"/>
</dbReference>
<dbReference type="GO" id="GO:0071540">
    <property type="term" value="C:eukaryotic translation initiation factor 3 complex, eIF3e"/>
    <property type="evidence" value="ECO:0000314"/>
    <property type="project" value="PomBase"/>
</dbReference>
<dbReference type="GO" id="GO:0071541">
    <property type="term" value="C:eukaryotic translation initiation factor 3 complex, eIF3m"/>
    <property type="evidence" value="ECO:0000314"/>
    <property type="project" value="PomBase"/>
</dbReference>
<dbReference type="GO" id="GO:0101005">
    <property type="term" value="F:deubiquitinase activity"/>
    <property type="evidence" value="ECO:0000255"/>
    <property type="project" value="PomBase"/>
</dbReference>
<dbReference type="GO" id="GO:0008237">
    <property type="term" value="F:metallopeptidase activity"/>
    <property type="evidence" value="ECO:0007669"/>
    <property type="project" value="InterPro"/>
</dbReference>
<dbReference type="GO" id="GO:0003743">
    <property type="term" value="F:translation initiation factor activity"/>
    <property type="evidence" value="ECO:0007669"/>
    <property type="project" value="UniProtKB-UniRule"/>
</dbReference>
<dbReference type="GO" id="GO:0031369">
    <property type="term" value="F:translation initiation factor binding"/>
    <property type="evidence" value="ECO:0000318"/>
    <property type="project" value="GO_Central"/>
</dbReference>
<dbReference type="GO" id="GO:0002183">
    <property type="term" value="P:cytoplasmic translational initiation"/>
    <property type="evidence" value="ECO:0000315"/>
    <property type="project" value="PomBase"/>
</dbReference>
<dbReference type="GO" id="GO:0001732">
    <property type="term" value="P:formation of cytoplasmic translation initiation complex"/>
    <property type="evidence" value="ECO:0000305"/>
    <property type="project" value="PomBase"/>
</dbReference>
<dbReference type="GO" id="GO:0006413">
    <property type="term" value="P:translational initiation"/>
    <property type="evidence" value="ECO:0000318"/>
    <property type="project" value="GO_Central"/>
</dbReference>
<dbReference type="CDD" id="cd08064">
    <property type="entry name" value="MPN_eIF3f"/>
    <property type="match status" value="1"/>
</dbReference>
<dbReference type="Gene3D" id="3.40.140.10">
    <property type="entry name" value="Cytidine Deaminase, domain 2"/>
    <property type="match status" value="1"/>
</dbReference>
<dbReference type="HAMAP" id="MF_03005">
    <property type="entry name" value="eIF3f"/>
    <property type="match status" value="1"/>
</dbReference>
<dbReference type="InterPro" id="IPR027531">
    <property type="entry name" value="eIF3f"/>
</dbReference>
<dbReference type="InterPro" id="IPR024969">
    <property type="entry name" value="EIF3F/CSN6-like_C"/>
</dbReference>
<dbReference type="InterPro" id="IPR000555">
    <property type="entry name" value="JAMM/MPN+_dom"/>
</dbReference>
<dbReference type="InterPro" id="IPR037518">
    <property type="entry name" value="MPN"/>
</dbReference>
<dbReference type="PANTHER" id="PTHR10540:SF6">
    <property type="entry name" value="EUKARYOTIC TRANSLATION INITIATION FACTOR 3 SUBUNIT F"/>
    <property type="match status" value="1"/>
</dbReference>
<dbReference type="PANTHER" id="PTHR10540">
    <property type="entry name" value="EUKARYOTIC TRANSLATION INITIATION FACTOR 3 SUBUNIT F-RELATED"/>
    <property type="match status" value="1"/>
</dbReference>
<dbReference type="Pfam" id="PF01398">
    <property type="entry name" value="JAB"/>
    <property type="match status" value="1"/>
</dbReference>
<dbReference type="Pfam" id="PF13012">
    <property type="entry name" value="MitMem_reg"/>
    <property type="match status" value="1"/>
</dbReference>
<dbReference type="SMART" id="SM00232">
    <property type="entry name" value="JAB_MPN"/>
    <property type="match status" value="1"/>
</dbReference>
<dbReference type="PROSITE" id="PS50249">
    <property type="entry name" value="MPN"/>
    <property type="match status" value="1"/>
</dbReference>
<protein>
    <recommendedName>
        <fullName evidence="1 6">Eukaryotic translation initiation factor 3 subunit F</fullName>
        <shortName evidence="1 6">eIF3f</shortName>
    </recommendedName>
</protein>
<feature type="chain" id="PRO_0000347327" description="Eukaryotic translation initiation factor 3 subunit F">
    <location>
        <begin position="1"/>
        <end position="302"/>
    </location>
</feature>
<feature type="domain" description="MPN" evidence="2">
    <location>
        <begin position="23"/>
        <end position="165"/>
    </location>
</feature>
<feature type="modified residue" description="Phosphoserine" evidence="1 5">
    <location>
        <position position="162"/>
    </location>
</feature>